<evidence type="ECO:0000255" key="1">
    <source>
        <dbReference type="HAMAP-Rule" id="MF_00501"/>
    </source>
</evidence>
<evidence type="ECO:0000305" key="2"/>
<gene>
    <name evidence="1" type="primary">rpmE</name>
    <name type="ordered locus">BCG_1358</name>
</gene>
<reference key="1">
    <citation type="journal article" date="2007" name="Proc. Natl. Acad. Sci. U.S.A.">
        <title>Genome plasticity of BCG and impact on vaccine efficacy.</title>
        <authorList>
            <person name="Brosch R."/>
            <person name="Gordon S.V."/>
            <person name="Garnier T."/>
            <person name="Eiglmeier K."/>
            <person name="Frigui W."/>
            <person name="Valenti P."/>
            <person name="Dos Santos S."/>
            <person name="Duthoy S."/>
            <person name="Lacroix C."/>
            <person name="Garcia-Pelayo C."/>
            <person name="Inwald J.K."/>
            <person name="Golby P."/>
            <person name="Garcia J.N."/>
            <person name="Hewinson R.G."/>
            <person name="Behr M.A."/>
            <person name="Quail M.A."/>
            <person name="Churcher C."/>
            <person name="Barrell B.G."/>
            <person name="Parkhill J."/>
            <person name="Cole S.T."/>
        </authorList>
    </citation>
    <scope>NUCLEOTIDE SEQUENCE [LARGE SCALE GENOMIC DNA]</scope>
    <source>
        <strain>BCG / Pasteur 1173P2</strain>
    </source>
</reference>
<accession>A1KI86</accession>
<protein>
    <recommendedName>
        <fullName evidence="1">Large ribosomal subunit protein bL31</fullName>
    </recommendedName>
    <alternativeName>
        <fullName evidence="2">50S ribosomal protein L31</fullName>
    </alternativeName>
</protein>
<feature type="chain" id="PRO_1000126663" description="Large ribosomal subunit protein bL31">
    <location>
        <begin position="1"/>
        <end position="80"/>
    </location>
</feature>
<feature type="binding site" evidence="1">
    <location>
        <position position="16"/>
    </location>
    <ligand>
        <name>Zn(2+)</name>
        <dbReference type="ChEBI" id="CHEBI:29105"/>
    </ligand>
</feature>
<feature type="binding site" evidence="1">
    <location>
        <position position="18"/>
    </location>
    <ligand>
        <name>Zn(2+)</name>
        <dbReference type="ChEBI" id="CHEBI:29105"/>
    </ligand>
</feature>
<feature type="binding site" evidence="1">
    <location>
        <position position="38"/>
    </location>
    <ligand>
        <name>Zn(2+)</name>
        <dbReference type="ChEBI" id="CHEBI:29105"/>
    </ligand>
</feature>
<feature type="binding site" evidence="1">
    <location>
        <position position="41"/>
    </location>
    <ligand>
        <name>Zn(2+)</name>
        <dbReference type="ChEBI" id="CHEBI:29105"/>
    </ligand>
</feature>
<sequence>MKSDIHPAYEETTVVCGCGNTFQTRSTKPGGRIVVEVCSQCHPFYTGKQKILDSGGRVARFEKRYGKRKVGADKAVSTGK</sequence>
<organism>
    <name type="scientific">Mycobacterium bovis (strain BCG / Pasteur 1173P2)</name>
    <dbReference type="NCBI Taxonomy" id="410289"/>
    <lineage>
        <taxon>Bacteria</taxon>
        <taxon>Bacillati</taxon>
        <taxon>Actinomycetota</taxon>
        <taxon>Actinomycetes</taxon>
        <taxon>Mycobacteriales</taxon>
        <taxon>Mycobacteriaceae</taxon>
        <taxon>Mycobacterium</taxon>
        <taxon>Mycobacterium tuberculosis complex</taxon>
    </lineage>
</organism>
<proteinExistence type="inferred from homology"/>
<keyword id="KW-0479">Metal-binding</keyword>
<keyword id="KW-0687">Ribonucleoprotein</keyword>
<keyword id="KW-0689">Ribosomal protein</keyword>
<keyword id="KW-0694">RNA-binding</keyword>
<keyword id="KW-0699">rRNA-binding</keyword>
<keyword id="KW-0862">Zinc</keyword>
<dbReference type="EMBL" id="AM408590">
    <property type="protein sequence ID" value="CAL71345.1"/>
    <property type="molecule type" value="Genomic_DNA"/>
</dbReference>
<dbReference type="RefSeq" id="WP_003406668.1">
    <property type="nucleotide sequence ID" value="NC_008769.1"/>
</dbReference>
<dbReference type="SMR" id="A1KI86"/>
<dbReference type="GeneID" id="45425272"/>
<dbReference type="KEGG" id="mbb:BCG_1358"/>
<dbReference type="HOGENOM" id="CLU_114306_4_0_11"/>
<dbReference type="Proteomes" id="UP000001472">
    <property type="component" value="Chromosome"/>
</dbReference>
<dbReference type="GO" id="GO:1990904">
    <property type="term" value="C:ribonucleoprotein complex"/>
    <property type="evidence" value="ECO:0007669"/>
    <property type="project" value="UniProtKB-KW"/>
</dbReference>
<dbReference type="GO" id="GO:0005840">
    <property type="term" value="C:ribosome"/>
    <property type="evidence" value="ECO:0007669"/>
    <property type="project" value="UniProtKB-KW"/>
</dbReference>
<dbReference type="GO" id="GO:0046872">
    <property type="term" value="F:metal ion binding"/>
    <property type="evidence" value="ECO:0007669"/>
    <property type="project" value="UniProtKB-KW"/>
</dbReference>
<dbReference type="GO" id="GO:0019843">
    <property type="term" value="F:rRNA binding"/>
    <property type="evidence" value="ECO:0007669"/>
    <property type="project" value="UniProtKB-KW"/>
</dbReference>
<dbReference type="GO" id="GO:0003735">
    <property type="term" value="F:structural constituent of ribosome"/>
    <property type="evidence" value="ECO:0007669"/>
    <property type="project" value="InterPro"/>
</dbReference>
<dbReference type="GO" id="GO:0006412">
    <property type="term" value="P:translation"/>
    <property type="evidence" value="ECO:0007669"/>
    <property type="project" value="UniProtKB-UniRule"/>
</dbReference>
<dbReference type="Gene3D" id="4.10.830.30">
    <property type="entry name" value="Ribosomal protein L31"/>
    <property type="match status" value="1"/>
</dbReference>
<dbReference type="HAMAP" id="MF_00501">
    <property type="entry name" value="Ribosomal_bL31_1"/>
    <property type="match status" value="1"/>
</dbReference>
<dbReference type="InterPro" id="IPR034704">
    <property type="entry name" value="Ribosomal_bL28/bL31-like_sf"/>
</dbReference>
<dbReference type="InterPro" id="IPR002150">
    <property type="entry name" value="Ribosomal_bL31"/>
</dbReference>
<dbReference type="InterPro" id="IPR027491">
    <property type="entry name" value="Ribosomal_bL31_A"/>
</dbReference>
<dbReference type="InterPro" id="IPR042105">
    <property type="entry name" value="Ribosomal_bL31_sf"/>
</dbReference>
<dbReference type="NCBIfam" id="TIGR00105">
    <property type="entry name" value="L31"/>
    <property type="match status" value="1"/>
</dbReference>
<dbReference type="NCBIfam" id="NF000612">
    <property type="entry name" value="PRK00019.1"/>
    <property type="match status" value="1"/>
</dbReference>
<dbReference type="NCBIfam" id="NF001809">
    <property type="entry name" value="PRK00528.1"/>
    <property type="match status" value="1"/>
</dbReference>
<dbReference type="PANTHER" id="PTHR33280">
    <property type="entry name" value="50S RIBOSOMAL PROTEIN L31, CHLOROPLASTIC"/>
    <property type="match status" value="1"/>
</dbReference>
<dbReference type="PANTHER" id="PTHR33280:SF1">
    <property type="entry name" value="LARGE RIBOSOMAL SUBUNIT PROTEIN BL31C"/>
    <property type="match status" value="1"/>
</dbReference>
<dbReference type="Pfam" id="PF01197">
    <property type="entry name" value="Ribosomal_L31"/>
    <property type="match status" value="1"/>
</dbReference>
<dbReference type="PRINTS" id="PR01249">
    <property type="entry name" value="RIBOSOMALL31"/>
</dbReference>
<dbReference type="SUPFAM" id="SSF143800">
    <property type="entry name" value="L28p-like"/>
    <property type="match status" value="1"/>
</dbReference>
<dbReference type="PROSITE" id="PS01143">
    <property type="entry name" value="RIBOSOMAL_L31"/>
    <property type="match status" value="1"/>
</dbReference>
<comment type="function">
    <text evidence="1">Binds the 23S rRNA.</text>
</comment>
<comment type="cofactor">
    <cofactor evidence="1">
        <name>Zn(2+)</name>
        <dbReference type="ChEBI" id="CHEBI:29105"/>
    </cofactor>
    <text evidence="1">Binds 1 zinc ion per subunit.</text>
</comment>
<comment type="subunit">
    <text evidence="1">Part of the 50S ribosomal subunit.</text>
</comment>
<comment type="similarity">
    <text evidence="1">Belongs to the bacterial ribosomal protein bL31 family. Type A subfamily.</text>
</comment>
<name>RL31_MYCBP</name>